<dbReference type="EMBL" id="CP000240">
    <property type="protein sequence ID" value="ABD02905.1"/>
    <property type="molecule type" value="Genomic_DNA"/>
</dbReference>
<dbReference type="RefSeq" id="WP_011433544.1">
    <property type="nucleotide sequence ID" value="NC_007776.1"/>
</dbReference>
<dbReference type="SMR" id="Q2JK90"/>
<dbReference type="STRING" id="321332.CYB_1950"/>
<dbReference type="KEGG" id="cyb:CYB_1950"/>
<dbReference type="eggNOG" id="COG1327">
    <property type="taxonomic scope" value="Bacteria"/>
</dbReference>
<dbReference type="HOGENOM" id="CLU_108412_0_0_3"/>
<dbReference type="OrthoDB" id="9807461at2"/>
<dbReference type="Proteomes" id="UP000001938">
    <property type="component" value="Chromosome"/>
</dbReference>
<dbReference type="GO" id="GO:0005524">
    <property type="term" value="F:ATP binding"/>
    <property type="evidence" value="ECO:0007669"/>
    <property type="project" value="UniProtKB-KW"/>
</dbReference>
<dbReference type="GO" id="GO:0003677">
    <property type="term" value="F:DNA binding"/>
    <property type="evidence" value="ECO:0007669"/>
    <property type="project" value="UniProtKB-KW"/>
</dbReference>
<dbReference type="GO" id="GO:0008270">
    <property type="term" value="F:zinc ion binding"/>
    <property type="evidence" value="ECO:0007669"/>
    <property type="project" value="UniProtKB-UniRule"/>
</dbReference>
<dbReference type="GO" id="GO:0045892">
    <property type="term" value="P:negative regulation of DNA-templated transcription"/>
    <property type="evidence" value="ECO:0007669"/>
    <property type="project" value="UniProtKB-UniRule"/>
</dbReference>
<dbReference type="HAMAP" id="MF_00440">
    <property type="entry name" value="NrdR"/>
    <property type="match status" value="1"/>
</dbReference>
<dbReference type="InterPro" id="IPR005144">
    <property type="entry name" value="ATP-cone_dom"/>
</dbReference>
<dbReference type="InterPro" id="IPR055173">
    <property type="entry name" value="NrdR-like_N"/>
</dbReference>
<dbReference type="InterPro" id="IPR003796">
    <property type="entry name" value="RNR_NrdR-like"/>
</dbReference>
<dbReference type="NCBIfam" id="TIGR00244">
    <property type="entry name" value="transcriptional regulator NrdR"/>
    <property type="match status" value="1"/>
</dbReference>
<dbReference type="PANTHER" id="PTHR30455">
    <property type="entry name" value="TRANSCRIPTIONAL REPRESSOR NRDR"/>
    <property type="match status" value="1"/>
</dbReference>
<dbReference type="PANTHER" id="PTHR30455:SF2">
    <property type="entry name" value="TRANSCRIPTIONAL REPRESSOR NRDR"/>
    <property type="match status" value="1"/>
</dbReference>
<dbReference type="Pfam" id="PF03477">
    <property type="entry name" value="ATP-cone"/>
    <property type="match status" value="1"/>
</dbReference>
<dbReference type="Pfam" id="PF22811">
    <property type="entry name" value="Zn_ribbon_NrdR"/>
    <property type="match status" value="1"/>
</dbReference>
<dbReference type="PROSITE" id="PS51161">
    <property type="entry name" value="ATP_CONE"/>
    <property type="match status" value="1"/>
</dbReference>
<gene>
    <name evidence="1" type="primary">nrdR</name>
    <name type="ordered locus">CYB_1950</name>
</gene>
<evidence type="ECO:0000255" key="1">
    <source>
        <dbReference type="HAMAP-Rule" id="MF_00440"/>
    </source>
</evidence>
<evidence type="ECO:0000256" key="2">
    <source>
        <dbReference type="SAM" id="MobiDB-lite"/>
    </source>
</evidence>
<protein>
    <recommendedName>
        <fullName evidence="1">Transcriptional repressor NrdR</fullName>
    </recommendedName>
</protein>
<proteinExistence type="inferred from homology"/>
<feature type="chain" id="PRO_0000264224" description="Transcriptional repressor NrdR">
    <location>
        <begin position="1"/>
        <end position="180"/>
    </location>
</feature>
<feature type="domain" description="ATP-cone" evidence="1">
    <location>
        <begin position="49"/>
        <end position="139"/>
    </location>
</feature>
<feature type="zinc finger region" evidence="1">
    <location>
        <begin position="3"/>
        <end position="34"/>
    </location>
</feature>
<feature type="region of interest" description="Disordered" evidence="2">
    <location>
        <begin position="155"/>
        <end position="180"/>
    </location>
</feature>
<feature type="compositionally biased region" description="Low complexity" evidence="2">
    <location>
        <begin position="160"/>
        <end position="174"/>
    </location>
</feature>
<sequence>MKCPRCSKQEIRVLESRSAEGGQSVRRRRECMSCGYRFTTYERIEFMPIMVIKRDGSRESFNRNKILQGVMRACQKTPVTVRQMEELVNEIEEKLQLEDAQEVTSLRIGEMVLERLQHLSEVAYVRFASVYRQFQGIKDFVNELEQLEPPLRRDLERLLQDSSASDSESSGSPDLVGEYS</sequence>
<accession>Q2JK90</accession>
<keyword id="KW-0067">ATP-binding</keyword>
<keyword id="KW-0238">DNA-binding</keyword>
<keyword id="KW-0479">Metal-binding</keyword>
<keyword id="KW-0547">Nucleotide-binding</keyword>
<keyword id="KW-1185">Reference proteome</keyword>
<keyword id="KW-0678">Repressor</keyword>
<keyword id="KW-0804">Transcription</keyword>
<keyword id="KW-0805">Transcription regulation</keyword>
<keyword id="KW-0862">Zinc</keyword>
<keyword id="KW-0863">Zinc-finger</keyword>
<name>NRDR_SYNJB</name>
<reference key="1">
    <citation type="journal article" date="2007" name="ISME J.">
        <title>Population level functional diversity in a microbial community revealed by comparative genomic and metagenomic analyses.</title>
        <authorList>
            <person name="Bhaya D."/>
            <person name="Grossman A.R."/>
            <person name="Steunou A.-S."/>
            <person name="Khuri N."/>
            <person name="Cohan F.M."/>
            <person name="Hamamura N."/>
            <person name="Melendrez M.C."/>
            <person name="Bateson M.M."/>
            <person name="Ward D.M."/>
            <person name="Heidelberg J.F."/>
        </authorList>
    </citation>
    <scope>NUCLEOTIDE SEQUENCE [LARGE SCALE GENOMIC DNA]</scope>
    <source>
        <strain>JA-2-3B'a(2-13)</strain>
    </source>
</reference>
<organism>
    <name type="scientific">Synechococcus sp. (strain JA-2-3B'a(2-13))</name>
    <name type="common">Cyanobacteria bacterium Yellowstone B-Prime</name>
    <dbReference type="NCBI Taxonomy" id="321332"/>
    <lineage>
        <taxon>Bacteria</taxon>
        <taxon>Bacillati</taxon>
        <taxon>Cyanobacteriota</taxon>
        <taxon>Cyanophyceae</taxon>
        <taxon>Synechococcales</taxon>
        <taxon>Synechococcaceae</taxon>
        <taxon>Synechococcus</taxon>
    </lineage>
</organism>
<comment type="function">
    <text evidence="1">Negatively regulates transcription of bacterial ribonucleotide reductase nrd genes and operons by binding to NrdR-boxes.</text>
</comment>
<comment type="cofactor">
    <cofactor evidence="1">
        <name>Zn(2+)</name>
        <dbReference type="ChEBI" id="CHEBI:29105"/>
    </cofactor>
    <text evidence="1">Binds 1 zinc ion.</text>
</comment>
<comment type="similarity">
    <text evidence="1">Belongs to the NrdR family.</text>
</comment>